<evidence type="ECO:0000250" key="1">
    <source>
        <dbReference type="UniProtKB" id="P33371"/>
    </source>
</evidence>
<evidence type="ECO:0000250" key="2">
    <source>
        <dbReference type="UniProtKB" id="Q5SMC7"/>
    </source>
</evidence>
<evidence type="ECO:0000305" key="3"/>
<accession>O83945</accession>
<protein>
    <recommendedName>
        <fullName>Probable tRNA-dihydrouridine synthase</fullName>
        <ecNumber>1.3.1.-</ecNumber>
    </recommendedName>
</protein>
<gene>
    <name type="primary">dus</name>
    <name type="ordered locus">TP_0980</name>
</gene>
<proteinExistence type="inferred from homology"/>
<keyword id="KW-0285">Flavoprotein</keyword>
<keyword id="KW-0288">FMN</keyword>
<keyword id="KW-0521">NADP</keyword>
<keyword id="KW-0560">Oxidoreductase</keyword>
<keyword id="KW-1185">Reference proteome</keyword>
<keyword id="KW-0694">RNA-binding</keyword>
<keyword id="KW-0819">tRNA processing</keyword>
<keyword id="KW-0820">tRNA-binding</keyword>
<comment type="function">
    <text evidence="1">Catalyzes the synthesis of 5,6-dihydrouridine (D), a modified base found in the D-loop of most tRNAs, via the reduction of the C5-C6 double bond in target uridines.</text>
</comment>
<comment type="catalytic activity">
    <reaction evidence="1">
        <text>a 5,6-dihydrouridine in tRNA + NAD(+) = a uridine in tRNA + NADH + H(+)</text>
        <dbReference type="Rhea" id="RHEA:54452"/>
        <dbReference type="Rhea" id="RHEA-COMP:13339"/>
        <dbReference type="Rhea" id="RHEA-COMP:13887"/>
        <dbReference type="ChEBI" id="CHEBI:15378"/>
        <dbReference type="ChEBI" id="CHEBI:57540"/>
        <dbReference type="ChEBI" id="CHEBI:57945"/>
        <dbReference type="ChEBI" id="CHEBI:65315"/>
        <dbReference type="ChEBI" id="CHEBI:74443"/>
    </reaction>
</comment>
<comment type="catalytic activity">
    <reaction evidence="1">
        <text>a 5,6-dihydrouridine in tRNA + NADP(+) = a uridine in tRNA + NADPH + H(+)</text>
        <dbReference type="Rhea" id="RHEA:23624"/>
        <dbReference type="Rhea" id="RHEA-COMP:13339"/>
        <dbReference type="Rhea" id="RHEA-COMP:13887"/>
        <dbReference type="ChEBI" id="CHEBI:15378"/>
        <dbReference type="ChEBI" id="CHEBI:57783"/>
        <dbReference type="ChEBI" id="CHEBI:58349"/>
        <dbReference type="ChEBI" id="CHEBI:65315"/>
        <dbReference type="ChEBI" id="CHEBI:74443"/>
    </reaction>
</comment>
<comment type="cofactor">
    <cofactor evidence="1">
        <name>FMN</name>
        <dbReference type="ChEBI" id="CHEBI:58210"/>
    </cofactor>
</comment>
<comment type="similarity">
    <text evidence="3">Belongs to the Dus family.</text>
</comment>
<feature type="chain" id="PRO_0000162152" description="Probable tRNA-dihydrouridine synthase">
    <location>
        <begin position="1"/>
        <end position="340"/>
    </location>
</feature>
<feature type="active site" description="Proton donor" evidence="2">
    <location>
        <position position="110"/>
    </location>
</feature>
<feature type="binding site" evidence="1">
    <location>
        <begin position="25"/>
        <end position="27"/>
    </location>
    <ligand>
        <name>FMN</name>
        <dbReference type="ChEBI" id="CHEBI:58210"/>
    </ligand>
</feature>
<feature type="binding site" evidence="1">
    <location>
        <position position="79"/>
    </location>
    <ligand>
        <name>FMN</name>
        <dbReference type="ChEBI" id="CHEBI:58210"/>
    </ligand>
</feature>
<feature type="binding site" evidence="1">
    <location>
        <position position="154"/>
    </location>
    <ligand>
        <name>FMN</name>
        <dbReference type="ChEBI" id="CHEBI:58210"/>
    </ligand>
</feature>
<feature type="binding site" evidence="1">
    <location>
        <begin position="219"/>
        <end position="221"/>
    </location>
    <ligand>
        <name>FMN</name>
        <dbReference type="ChEBI" id="CHEBI:58210"/>
    </ligand>
</feature>
<feature type="binding site" evidence="1">
    <location>
        <begin position="243"/>
        <end position="244"/>
    </location>
    <ligand>
        <name>FMN</name>
        <dbReference type="ChEBI" id="CHEBI:58210"/>
    </ligand>
</feature>
<sequence length="340" mass="37161">MQQHALYHPVSIGPLSLKGNVFFAPVAGYSDSAFRSIAIEWEASFTYTEMVSSEAMVRDSLNTKRLIRRASNETHYAIQIFGSNPAVMAETAKLIVDSAQPSCIDINAGCPMPKITKTGAGAALTREPTRLYEVVKAVADAVYAQDARIPVTVKIRAGWEEAHLTWKEAARAAVDAGAQALALHPRTCAQCYAGEANWDIIADLVQCARGWGEVPVFGSGDLHAPEDARAMLEHTACAGVMFARGAMGNPFIFRQTRQLLTEGYYTPVTFEQKLRAAWRELHLLAQDVGESSACKQMRKRFVSYAKGERGKTQWCQRAVHASSFADFAAVIRDACPCIGL</sequence>
<dbReference type="EC" id="1.3.1.-"/>
<dbReference type="EMBL" id="AE000520">
    <property type="protein sequence ID" value="AAC65935.1"/>
    <property type="molecule type" value="Genomic_DNA"/>
</dbReference>
<dbReference type="PIR" id="B71258">
    <property type="entry name" value="B71258"/>
</dbReference>
<dbReference type="SMR" id="O83945"/>
<dbReference type="STRING" id="243276.TP_0980"/>
<dbReference type="EnsemblBacteria" id="AAC65935">
    <property type="protein sequence ID" value="AAC65935"/>
    <property type="gene ID" value="TP_0980"/>
</dbReference>
<dbReference type="KEGG" id="tpa:TP_0980"/>
<dbReference type="KEGG" id="tpw:TPANIC_0980"/>
<dbReference type="eggNOG" id="COG0042">
    <property type="taxonomic scope" value="Bacteria"/>
</dbReference>
<dbReference type="eggNOG" id="COG3116">
    <property type="taxonomic scope" value="Bacteria"/>
</dbReference>
<dbReference type="HOGENOM" id="CLU_013299_0_3_12"/>
<dbReference type="OrthoDB" id="9764501at2"/>
<dbReference type="Proteomes" id="UP000000811">
    <property type="component" value="Chromosome"/>
</dbReference>
<dbReference type="GO" id="GO:0050660">
    <property type="term" value="F:flavin adenine dinucleotide binding"/>
    <property type="evidence" value="ECO:0007669"/>
    <property type="project" value="InterPro"/>
</dbReference>
<dbReference type="GO" id="GO:0000049">
    <property type="term" value="F:tRNA binding"/>
    <property type="evidence" value="ECO:0007669"/>
    <property type="project" value="UniProtKB-KW"/>
</dbReference>
<dbReference type="GO" id="GO:0017150">
    <property type="term" value="F:tRNA dihydrouridine synthase activity"/>
    <property type="evidence" value="ECO:0007669"/>
    <property type="project" value="InterPro"/>
</dbReference>
<dbReference type="CDD" id="cd02801">
    <property type="entry name" value="DUS_like_FMN"/>
    <property type="match status" value="1"/>
</dbReference>
<dbReference type="Gene3D" id="3.20.20.70">
    <property type="entry name" value="Aldolase class I"/>
    <property type="match status" value="1"/>
</dbReference>
<dbReference type="Gene3D" id="1.10.1200.80">
    <property type="entry name" value="Putative flavin oxidoreducatase, domain 2"/>
    <property type="match status" value="1"/>
</dbReference>
<dbReference type="InterPro" id="IPR013785">
    <property type="entry name" value="Aldolase_TIM"/>
</dbReference>
<dbReference type="InterPro" id="IPR035587">
    <property type="entry name" value="DUS-like_FMN-bd"/>
</dbReference>
<dbReference type="InterPro" id="IPR001269">
    <property type="entry name" value="DUS_fam"/>
</dbReference>
<dbReference type="InterPro" id="IPR004652">
    <property type="entry name" value="DusB-like"/>
</dbReference>
<dbReference type="InterPro" id="IPR024036">
    <property type="entry name" value="tRNA-dHydroUridine_Synthase_C"/>
</dbReference>
<dbReference type="InterPro" id="IPR018517">
    <property type="entry name" value="tRNA_hU_synthase_CS"/>
</dbReference>
<dbReference type="NCBIfam" id="TIGR00737">
    <property type="entry name" value="nifR3_yhdG"/>
    <property type="match status" value="1"/>
</dbReference>
<dbReference type="PANTHER" id="PTHR45846">
    <property type="entry name" value="TRNA-DIHYDROURIDINE(47) SYNTHASE [NAD(P)(+)]-LIKE"/>
    <property type="match status" value="1"/>
</dbReference>
<dbReference type="PANTHER" id="PTHR45846:SF1">
    <property type="entry name" value="TRNA-DIHYDROURIDINE(47) SYNTHASE [NAD(P)(+)]-LIKE"/>
    <property type="match status" value="1"/>
</dbReference>
<dbReference type="Pfam" id="PF01207">
    <property type="entry name" value="Dus"/>
    <property type="match status" value="1"/>
</dbReference>
<dbReference type="PIRSF" id="PIRSF006621">
    <property type="entry name" value="Dus"/>
    <property type="match status" value="1"/>
</dbReference>
<dbReference type="SUPFAM" id="SSF51395">
    <property type="entry name" value="FMN-linked oxidoreductases"/>
    <property type="match status" value="1"/>
</dbReference>
<dbReference type="PROSITE" id="PS01136">
    <property type="entry name" value="UPF0034"/>
    <property type="match status" value="1"/>
</dbReference>
<name>DUS_TREPA</name>
<reference key="1">
    <citation type="journal article" date="1998" name="Science">
        <title>Complete genome sequence of Treponema pallidum, the syphilis spirochete.</title>
        <authorList>
            <person name="Fraser C.M."/>
            <person name="Norris S.J."/>
            <person name="Weinstock G.M."/>
            <person name="White O."/>
            <person name="Sutton G.G."/>
            <person name="Dodson R.J."/>
            <person name="Gwinn M.L."/>
            <person name="Hickey E.K."/>
            <person name="Clayton R.A."/>
            <person name="Ketchum K.A."/>
            <person name="Sodergren E."/>
            <person name="Hardham J.M."/>
            <person name="McLeod M.P."/>
            <person name="Salzberg S.L."/>
            <person name="Peterson J.D."/>
            <person name="Khalak H.G."/>
            <person name="Richardson D.L."/>
            <person name="Howell J.K."/>
            <person name="Chidambaram M."/>
            <person name="Utterback T.R."/>
            <person name="McDonald L.A."/>
            <person name="Artiach P."/>
            <person name="Bowman C."/>
            <person name="Cotton M.D."/>
            <person name="Fujii C."/>
            <person name="Garland S.A."/>
            <person name="Hatch B."/>
            <person name="Horst K."/>
            <person name="Roberts K.M."/>
            <person name="Sandusky M."/>
            <person name="Weidman J.F."/>
            <person name="Smith H.O."/>
            <person name="Venter J.C."/>
        </authorList>
    </citation>
    <scope>NUCLEOTIDE SEQUENCE [LARGE SCALE GENOMIC DNA]</scope>
    <source>
        <strain>Nichols</strain>
    </source>
</reference>
<organism>
    <name type="scientific">Treponema pallidum (strain Nichols)</name>
    <dbReference type="NCBI Taxonomy" id="243276"/>
    <lineage>
        <taxon>Bacteria</taxon>
        <taxon>Pseudomonadati</taxon>
        <taxon>Spirochaetota</taxon>
        <taxon>Spirochaetia</taxon>
        <taxon>Spirochaetales</taxon>
        <taxon>Treponemataceae</taxon>
        <taxon>Treponema</taxon>
    </lineage>
</organism>